<protein>
    <recommendedName>
        <fullName evidence="1">Protoheme IX farnesyltransferase</fullName>
        <ecNumber evidence="1">2.5.1.141</ecNumber>
    </recommendedName>
    <alternativeName>
        <fullName evidence="1">Heme B farnesyltransferase</fullName>
    </alternativeName>
    <alternativeName>
        <fullName evidence="1">Heme O synthase</fullName>
    </alternativeName>
</protein>
<feature type="chain" id="PRO_0000346086" description="Protoheme IX farnesyltransferase">
    <location>
        <begin position="1"/>
        <end position="298"/>
    </location>
</feature>
<feature type="transmembrane region" description="Helical" evidence="1">
    <location>
        <begin position="23"/>
        <end position="43"/>
    </location>
</feature>
<feature type="transmembrane region" description="Helical" evidence="1">
    <location>
        <begin position="47"/>
        <end position="67"/>
    </location>
</feature>
<feature type="transmembrane region" description="Helical" evidence="1">
    <location>
        <begin position="93"/>
        <end position="113"/>
    </location>
</feature>
<feature type="transmembrane region" description="Helical" evidence="1">
    <location>
        <begin position="115"/>
        <end position="135"/>
    </location>
</feature>
<feature type="transmembrane region" description="Helical" evidence="1">
    <location>
        <begin position="143"/>
        <end position="163"/>
    </location>
</feature>
<feature type="transmembrane region" description="Helical" evidence="1">
    <location>
        <begin position="169"/>
        <end position="189"/>
    </location>
</feature>
<feature type="transmembrane region" description="Helical" evidence="1">
    <location>
        <begin position="211"/>
        <end position="231"/>
    </location>
</feature>
<feature type="transmembrane region" description="Helical" evidence="1">
    <location>
        <begin position="236"/>
        <end position="256"/>
    </location>
</feature>
<feature type="transmembrane region" description="Helical" evidence="1">
    <location>
        <begin position="278"/>
        <end position="298"/>
    </location>
</feature>
<dbReference type="EC" id="2.5.1.141" evidence="1"/>
<dbReference type="EMBL" id="CP000493">
    <property type="protein sequence ID" value="ABM81036.1"/>
    <property type="molecule type" value="Genomic_DNA"/>
</dbReference>
<dbReference type="RefSeq" id="WP_011822354.1">
    <property type="nucleotide sequence ID" value="NC_008818.1"/>
</dbReference>
<dbReference type="SMR" id="A2BM25"/>
<dbReference type="STRING" id="415426.Hbut_1202"/>
<dbReference type="EnsemblBacteria" id="ABM81036">
    <property type="protein sequence ID" value="ABM81036"/>
    <property type="gene ID" value="Hbut_1202"/>
</dbReference>
<dbReference type="GeneID" id="4781436"/>
<dbReference type="KEGG" id="hbu:Hbut_1202"/>
<dbReference type="eggNOG" id="arCOG00479">
    <property type="taxonomic scope" value="Archaea"/>
</dbReference>
<dbReference type="HOGENOM" id="CLU_029631_0_1_2"/>
<dbReference type="OrthoDB" id="15428at2157"/>
<dbReference type="UniPathway" id="UPA00834">
    <property type="reaction ID" value="UER00712"/>
</dbReference>
<dbReference type="Proteomes" id="UP000002593">
    <property type="component" value="Chromosome"/>
</dbReference>
<dbReference type="GO" id="GO:0005886">
    <property type="term" value="C:plasma membrane"/>
    <property type="evidence" value="ECO:0007669"/>
    <property type="project" value="UniProtKB-SubCell"/>
</dbReference>
<dbReference type="GO" id="GO:0008495">
    <property type="term" value="F:protoheme IX farnesyltransferase activity"/>
    <property type="evidence" value="ECO:0007669"/>
    <property type="project" value="UniProtKB-UniRule"/>
</dbReference>
<dbReference type="GO" id="GO:0048034">
    <property type="term" value="P:heme O biosynthetic process"/>
    <property type="evidence" value="ECO:0007669"/>
    <property type="project" value="UniProtKB-UniRule"/>
</dbReference>
<dbReference type="CDD" id="cd13957">
    <property type="entry name" value="PT_UbiA_Cox10"/>
    <property type="match status" value="1"/>
</dbReference>
<dbReference type="Gene3D" id="1.10.357.140">
    <property type="entry name" value="UbiA prenyltransferase"/>
    <property type="match status" value="1"/>
</dbReference>
<dbReference type="HAMAP" id="MF_00154">
    <property type="entry name" value="CyoE_CtaB"/>
    <property type="match status" value="1"/>
</dbReference>
<dbReference type="InterPro" id="IPR006369">
    <property type="entry name" value="Protohaem_IX_farnesylTrfase"/>
</dbReference>
<dbReference type="InterPro" id="IPR000537">
    <property type="entry name" value="UbiA_prenyltransferase"/>
</dbReference>
<dbReference type="InterPro" id="IPR030470">
    <property type="entry name" value="UbiA_prenylTrfase_CS"/>
</dbReference>
<dbReference type="InterPro" id="IPR044878">
    <property type="entry name" value="UbiA_sf"/>
</dbReference>
<dbReference type="NCBIfam" id="TIGR01473">
    <property type="entry name" value="cyoE_ctaB"/>
    <property type="match status" value="1"/>
</dbReference>
<dbReference type="PANTHER" id="PTHR43448">
    <property type="entry name" value="PROTOHEME IX FARNESYLTRANSFERASE, MITOCHONDRIAL"/>
    <property type="match status" value="1"/>
</dbReference>
<dbReference type="PANTHER" id="PTHR43448:SF2">
    <property type="entry name" value="PROTOHEME IX FARNESYLTRANSFERASE, MITOCHONDRIAL"/>
    <property type="match status" value="1"/>
</dbReference>
<dbReference type="Pfam" id="PF01040">
    <property type="entry name" value="UbiA"/>
    <property type="match status" value="1"/>
</dbReference>
<dbReference type="PROSITE" id="PS00943">
    <property type="entry name" value="UBIA"/>
    <property type="match status" value="1"/>
</dbReference>
<sequence>MQLSRVRSVLLDVFALAKVKQTLLLLFTMYTAYIVGGGLGKPYERHLVVLTLGFITIAAVTALNMYFDRDIDALMERTRDRPLPAGRLDPLKVFIATVAATIVSVILAWRIINPHFALAIVIGFLFDIVAYTYLLKRRTPLSIIAGAVAGGAPALGGWAAAAGRIDVNALLFSLIVATWVPSHIWFLATYYRDDYRRANVPMLPVVADTPIAVASGIGLGSLVMGYSIVGLWVNNVIGTVSLIVGVIAAIAIFHLAVKYAELGGDPNYSRTAFKKTNMMLGLVFLVMMLEKVVSYIIS</sequence>
<accession>A2BM25</accession>
<reference key="1">
    <citation type="journal article" date="2007" name="Archaea">
        <title>The genome of Hyperthermus butylicus: a sulfur-reducing, peptide fermenting, neutrophilic Crenarchaeote growing up to 108 degrees C.</title>
        <authorList>
            <person name="Bruegger K."/>
            <person name="Chen L."/>
            <person name="Stark M."/>
            <person name="Zibat A."/>
            <person name="Redder P."/>
            <person name="Ruepp A."/>
            <person name="Awayez M."/>
            <person name="She Q."/>
            <person name="Garrett R.A."/>
            <person name="Klenk H.-P."/>
        </authorList>
    </citation>
    <scope>NUCLEOTIDE SEQUENCE [LARGE SCALE GENOMIC DNA]</scope>
    <source>
        <strain>DSM 5456 / JCM 9403 / PLM1-5</strain>
    </source>
</reference>
<comment type="function">
    <text evidence="1">Converts heme B (protoheme IX) to heme O by substitution of the vinyl group on carbon 2 of heme B porphyrin ring with a hydroxyethyl farnesyl side group.</text>
</comment>
<comment type="catalytic activity">
    <reaction evidence="1">
        <text>heme b + (2E,6E)-farnesyl diphosphate + H2O = Fe(II)-heme o + diphosphate</text>
        <dbReference type="Rhea" id="RHEA:28070"/>
        <dbReference type="ChEBI" id="CHEBI:15377"/>
        <dbReference type="ChEBI" id="CHEBI:33019"/>
        <dbReference type="ChEBI" id="CHEBI:60344"/>
        <dbReference type="ChEBI" id="CHEBI:60530"/>
        <dbReference type="ChEBI" id="CHEBI:175763"/>
        <dbReference type="EC" id="2.5.1.141"/>
    </reaction>
</comment>
<comment type="pathway">
    <text evidence="1">Porphyrin-containing compound metabolism; heme O biosynthesis; heme O from protoheme: step 1/1.</text>
</comment>
<comment type="subcellular location">
    <subcellularLocation>
        <location evidence="1">Cell membrane</location>
        <topology evidence="1">Multi-pass membrane protein</topology>
    </subcellularLocation>
</comment>
<comment type="miscellaneous">
    <text evidence="1">Carbon 2 of the heme B porphyrin ring is defined according to the Fischer nomenclature.</text>
</comment>
<comment type="similarity">
    <text evidence="1">Belongs to the UbiA prenyltransferase family. Protoheme IX farnesyltransferase subfamily.</text>
</comment>
<name>COXX_HYPBU</name>
<organism>
    <name type="scientific">Hyperthermus butylicus (strain DSM 5456 / JCM 9403 / PLM1-5)</name>
    <dbReference type="NCBI Taxonomy" id="415426"/>
    <lineage>
        <taxon>Archaea</taxon>
        <taxon>Thermoproteota</taxon>
        <taxon>Thermoprotei</taxon>
        <taxon>Desulfurococcales</taxon>
        <taxon>Pyrodictiaceae</taxon>
        <taxon>Hyperthermus</taxon>
    </lineage>
</organism>
<keyword id="KW-1003">Cell membrane</keyword>
<keyword id="KW-0350">Heme biosynthesis</keyword>
<keyword id="KW-0472">Membrane</keyword>
<keyword id="KW-1185">Reference proteome</keyword>
<keyword id="KW-0808">Transferase</keyword>
<keyword id="KW-0812">Transmembrane</keyword>
<keyword id="KW-1133">Transmembrane helix</keyword>
<gene>
    <name evidence="1" type="primary">ctaB</name>
    <name type="ordered locus">Hbut_1202</name>
</gene>
<evidence type="ECO:0000255" key="1">
    <source>
        <dbReference type="HAMAP-Rule" id="MF_00154"/>
    </source>
</evidence>
<proteinExistence type="inferred from homology"/>